<feature type="chain" id="PRO_0000055565" description="Catalase-peroxidase">
    <location>
        <begin position="1"/>
        <end position="726"/>
    </location>
</feature>
<feature type="region of interest" description="Disordered" evidence="2">
    <location>
        <begin position="1"/>
        <end position="33"/>
    </location>
</feature>
<feature type="active site" description="Proton acceptor" evidence="1">
    <location>
        <position position="106"/>
    </location>
</feature>
<feature type="binding site" description="axial binding residue" evidence="1">
    <location>
        <position position="267"/>
    </location>
    <ligand>
        <name>heme b</name>
        <dbReference type="ChEBI" id="CHEBI:60344"/>
    </ligand>
    <ligandPart>
        <name>Fe</name>
        <dbReference type="ChEBI" id="CHEBI:18248"/>
    </ligandPart>
</feature>
<feature type="site" description="Transition state stabilizer" evidence="1">
    <location>
        <position position="102"/>
    </location>
</feature>
<feature type="cross-link" description="Tryptophyl-tyrosyl-methioninium (Trp-Tyr) (with M-252)" evidence="1">
    <location>
        <begin position="105"/>
        <end position="226"/>
    </location>
</feature>
<feature type="cross-link" description="Tryptophyl-tyrosyl-methioninium (Tyr-Met) (with W-105)" evidence="1">
    <location>
        <begin position="226"/>
        <end position="252"/>
    </location>
</feature>
<protein>
    <recommendedName>
        <fullName evidence="1">Catalase-peroxidase</fullName>
        <shortName evidence="1">CP</shortName>
        <ecNumber evidence="1">1.11.1.21</ecNumber>
    </recommendedName>
    <alternativeName>
        <fullName evidence="1">Peroxidase/catalase</fullName>
    </alternativeName>
</protein>
<accession>Q8Z303</accession>
<gene>
    <name evidence="1" type="primary">katG</name>
    <name type="ordered locus">STY3760</name>
    <name type="ordered locus">t3510</name>
</gene>
<name>KATG_SALTI</name>
<comment type="function">
    <text evidence="1">Bifunctional enzyme with both catalase and broad-spectrum peroxidase activity.</text>
</comment>
<comment type="catalytic activity">
    <reaction evidence="1">
        <text>H2O2 + AH2 = A + 2 H2O</text>
        <dbReference type="Rhea" id="RHEA:30275"/>
        <dbReference type="ChEBI" id="CHEBI:13193"/>
        <dbReference type="ChEBI" id="CHEBI:15377"/>
        <dbReference type="ChEBI" id="CHEBI:16240"/>
        <dbReference type="ChEBI" id="CHEBI:17499"/>
        <dbReference type="EC" id="1.11.1.21"/>
    </reaction>
</comment>
<comment type="catalytic activity">
    <reaction evidence="1">
        <text>2 H2O2 = O2 + 2 H2O</text>
        <dbReference type="Rhea" id="RHEA:20309"/>
        <dbReference type="ChEBI" id="CHEBI:15377"/>
        <dbReference type="ChEBI" id="CHEBI:15379"/>
        <dbReference type="ChEBI" id="CHEBI:16240"/>
        <dbReference type="EC" id="1.11.1.21"/>
    </reaction>
</comment>
<comment type="cofactor">
    <cofactor evidence="1">
        <name>heme b</name>
        <dbReference type="ChEBI" id="CHEBI:60344"/>
    </cofactor>
    <text evidence="1">Binds 1 heme b (iron(II)-protoporphyrin IX) group per dimer.</text>
</comment>
<comment type="subunit">
    <text evidence="1">Homodimer or homotetramer.</text>
</comment>
<comment type="PTM">
    <text evidence="1">Formation of the three residue Trp-Tyr-Met cross-link is important for the catalase, but not the peroxidase activity of the enzyme.</text>
</comment>
<comment type="similarity">
    <text evidence="1">Belongs to the peroxidase family. Peroxidase/catalase subfamily.</text>
</comment>
<sequence length="726" mass="79597">MSTTDDTHNTLSTGKCPFHQGGHDRSAGAGTASRDWWPNQLRVDLLNQHSNRSNPLGEDFDYRKEFSKLDYSALKGDLKALLTDSQPWWPADWGSYVGLFIRMAWHGAGTYRSIDGRGGAGRGQQRFAPLNSWPDNVSLDKARRLLWPIKQKYGQKISWADLFILAGNVALENSGFRTFGFGAGREDVWEPDLDVNWGDEKAWLTHRHPEALAKAPLGATEMGLIYVNPEGPDHSGEPLSAAAAIRATFGNMGMNDEETVALIAGGHTLGKTHGAAAASHVGADPEAAPIEAQGLGWASSYGSGVGADAITSGLEVVWTQTPTQWSNYFFENLFKYEWVQTRSPAGAIQFEAVDAPDIIPDPFDPSKKRKPTMLVTDLTLRFDPEFEKISRRFLNDPQAFNEAFARAWFKLTHRDMGPKARYIGPEVPKEDLIWQDPLPQPLYQPTQEDIINLKAAIAASGLSISEMVSVAWASASTFRGGDKRGGANGARLALAPQRDWEVNAVAARVLPVLEALQKTTNKASLADIIVLAGVVGIEQAAAAAGVSISVPFAPGRVDARQDQTDIEMFSLLEPIADGFRNYRARLDVSTTESLLIDKAQQLTLTAPEMTVLVGGMRVLGTNFDGSQNGVFTDRPGVLSTDFFANLLDMRYEWKPTDDANELFEGRDRLTGEVKYTATRADLVFGSNSVLRALAEVYACSDAHEKFVKDFVAAWVKVMNLDRFDLL</sequence>
<reference key="1">
    <citation type="journal article" date="2001" name="Nature">
        <title>Complete genome sequence of a multiple drug resistant Salmonella enterica serovar Typhi CT18.</title>
        <authorList>
            <person name="Parkhill J."/>
            <person name="Dougan G."/>
            <person name="James K.D."/>
            <person name="Thomson N.R."/>
            <person name="Pickard D."/>
            <person name="Wain J."/>
            <person name="Churcher C.M."/>
            <person name="Mungall K.L."/>
            <person name="Bentley S.D."/>
            <person name="Holden M.T.G."/>
            <person name="Sebaihia M."/>
            <person name="Baker S."/>
            <person name="Basham D."/>
            <person name="Brooks K."/>
            <person name="Chillingworth T."/>
            <person name="Connerton P."/>
            <person name="Cronin A."/>
            <person name="Davis P."/>
            <person name="Davies R.M."/>
            <person name="Dowd L."/>
            <person name="White N."/>
            <person name="Farrar J."/>
            <person name="Feltwell T."/>
            <person name="Hamlin N."/>
            <person name="Haque A."/>
            <person name="Hien T.T."/>
            <person name="Holroyd S."/>
            <person name="Jagels K."/>
            <person name="Krogh A."/>
            <person name="Larsen T.S."/>
            <person name="Leather S."/>
            <person name="Moule S."/>
            <person name="O'Gaora P."/>
            <person name="Parry C."/>
            <person name="Quail M.A."/>
            <person name="Rutherford K.M."/>
            <person name="Simmonds M."/>
            <person name="Skelton J."/>
            <person name="Stevens K."/>
            <person name="Whitehead S."/>
            <person name="Barrell B.G."/>
        </authorList>
    </citation>
    <scope>NUCLEOTIDE SEQUENCE [LARGE SCALE GENOMIC DNA]</scope>
    <source>
        <strain>CT18</strain>
    </source>
</reference>
<reference key="2">
    <citation type="journal article" date="2003" name="J. Bacteriol.">
        <title>Comparative genomics of Salmonella enterica serovar Typhi strains Ty2 and CT18.</title>
        <authorList>
            <person name="Deng W."/>
            <person name="Liou S.-R."/>
            <person name="Plunkett G. III"/>
            <person name="Mayhew G.F."/>
            <person name="Rose D.J."/>
            <person name="Burland V."/>
            <person name="Kodoyianni V."/>
            <person name="Schwartz D.C."/>
            <person name="Blattner F.R."/>
        </authorList>
    </citation>
    <scope>NUCLEOTIDE SEQUENCE [LARGE SCALE GENOMIC DNA]</scope>
    <source>
        <strain>ATCC 700931 / Ty2</strain>
    </source>
</reference>
<dbReference type="EC" id="1.11.1.21" evidence="1"/>
<dbReference type="EMBL" id="AL513382">
    <property type="protein sequence ID" value="CAD09515.1"/>
    <property type="molecule type" value="Genomic_DNA"/>
</dbReference>
<dbReference type="EMBL" id="AE014613">
    <property type="protein sequence ID" value="AAO71018.1"/>
    <property type="molecule type" value="Genomic_DNA"/>
</dbReference>
<dbReference type="RefSeq" id="NP_457945.1">
    <property type="nucleotide sequence ID" value="NC_003198.1"/>
</dbReference>
<dbReference type="RefSeq" id="WP_000108110.1">
    <property type="nucleotide sequence ID" value="NZ_WSUR01000010.1"/>
</dbReference>
<dbReference type="SMR" id="Q8Z303"/>
<dbReference type="STRING" id="220341.gene:17587626"/>
<dbReference type="PeroxiBase" id="3556">
    <property type="entry name" value="SetyCP01_CT18"/>
</dbReference>
<dbReference type="KEGG" id="stt:t3510"/>
<dbReference type="KEGG" id="sty:STY3760"/>
<dbReference type="PATRIC" id="fig|220341.7.peg.3834"/>
<dbReference type="eggNOG" id="COG0376">
    <property type="taxonomic scope" value="Bacteria"/>
</dbReference>
<dbReference type="HOGENOM" id="CLU_025424_2_0_6"/>
<dbReference type="OMA" id="GPETTWL"/>
<dbReference type="Proteomes" id="UP000000541">
    <property type="component" value="Chromosome"/>
</dbReference>
<dbReference type="Proteomes" id="UP000002670">
    <property type="component" value="Chromosome"/>
</dbReference>
<dbReference type="GO" id="GO:0005829">
    <property type="term" value="C:cytosol"/>
    <property type="evidence" value="ECO:0007669"/>
    <property type="project" value="TreeGrafter"/>
</dbReference>
<dbReference type="GO" id="GO:0004096">
    <property type="term" value="F:catalase activity"/>
    <property type="evidence" value="ECO:0007669"/>
    <property type="project" value="UniProtKB-UniRule"/>
</dbReference>
<dbReference type="GO" id="GO:0020037">
    <property type="term" value="F:heme binding"/>
    <property type="evidence" value="ECO:0007669"/>
    <property type="project" value="InterPro"/>
</dbReference>
<dbReference type="GO" id="GO:0046872">
    <property type="term" value="F:metal ion binding"/>
    <property type="evidence" value="ECO:0007669"/>
    <property type="project" value="UniProtKB-KW"/>
</dbReference>
<dbReference type="GO" id="GO:0070301">
    <property type="term" value="P:cellular response to hydrogen peroxide"/>
    <property type="evidence" value="ECO:0007669"/>
    <property type="project" value="TreeGrafter"/>
</dbReference>
<dbReference type="GO" id="GO:0042744">
    <property type="term" value="P:hydrogen peroxide catabolic process"/>
    <property type="evidence" value="ECO:0007669"/>
    <property type="project" value="UniProtKB-KW"/>
</dbReference>
<dbReference type="CDD" id="cd08200">
    <property type="entry name" value="catalase_peroxidase_2"/>
    <property type="match status" value="1"/>
</dbReference>
<dbReference type="FunFam" id="1.10.420.10:FF:000002">
    <property type="entry name" value="Catalase-peroxidase"/>
    <property type="match status" value="1"/>
</dbReference>
<dbReference type="FunFam" id="1.10.420.10:FF:000004">
    <property type="entry name" value="Catalase-peroxidase"/>
    <property type="match status" value="1"/>
</dbReference>
<dbReference type="FunFam" id="1.10.520.10:FF:000002">
    <property type="entry name" value="Catalase-peroxidase"/>
    <property type="match status" value="1"/>
</dbReference>
<dbReference type="Gene3D" id="1.10.520.10">
    <property type="match status" value="2"/>
</dbReference>
<dbReference type="Gene3D" id="1.10.420.10">
    <property type="entry name" value="Peroxidase, domain 2"/>
    <property type="match status" value="2"/>
</dbReference>
<dbReference type="HAMAP" id="MF_01961">
    <property type="entry name" value="Catal_peroxid"/>
    <property type="match status" value="1"/>
</dbReference>
<dbReference type="InterPro" id="IPR000763">
    <property type="entry name" value="Catalase_peroxidase"/>
</dbReference>
<dbReference type="InterPro" id="IPR002016">
    <property type="entry name" value="Haem_peroxidase"/>
</dbReference>
<dbReference type="InterPro" id="IPR010255">
    <property type="entry name" value="Haem_peroxidase_sf"/>
</dbReference>
<dbReference type="InterPro" id="IPR019794">
    <property type="entry name" value="Peroxidases_AS"/>
</dbReference>
<dbReference type="InterPro" id="IPR019793">
    <property type="entry name" value="Peroxidases_heam-ligand_BS"/>
</dbReference>
<dbReference type="NCBIfam" id="TIGR00198">
    <property type="entry name" value="cat_per_HPI"/>
    <property type="match status" value="1"/>
</dbReference>
<dbReference type="NCBIfam" id="NF011635">
    <property type="entry name" value="PRK15061.1"/>
    <property type="match status" value="1"/>
</dbReference>
<dbReference type="PANTHER" id="PTHR30555:SF0">
    <property type="entry name" value="CATALASE-PEROXIDASE"/>
    <property type="match status" value="1"/>
</dbReference>
<dbReference type="PANTHER" id="PTHR30555">
    <property type="entry name" value="HYDROPEROXIDASE I, BIFUNCTIONAL CATALASE-PEROXIDASE"/>
    <property type="match status" value="1"/>
</dbReference>
<dbReference type="Pfam" id="PF00141">
    <property type="entry name" value="peroxidase"/>
    <property type="match status" value="2"/>
</dbReference>
<dbReference type="PRINTS" id="PR00460">
    <property type="entry name" value="BPEROXIDASE"/>
</dbReference>
<dbReference type="PRINTS" id="PR00458">
    <property type="entry name" value="PEROXIDASE"/>
</dbReference>
<dbReference type="SUPFAM" id="SSF48113">
    <property type="entry name" value="Heme-dependent peroxidases"/>
    <property type="match status" value="2"/>
</dbReference>
<dbReference type="PROSITE" id="PS00435">
    <property type="entry name" value="PEROXIDASE_1"/>
    <property type="match status" value="1"/>
</dbReference>
<dbReference type="PROSITE" id="PS00436">
    <property type="entry name" value="PEROXIDASE_2"/>
    <property type="match status" value="1"/>
</dbReference>
<dbReference type="PROSITE" id="PS50873">
    <property type="entry name" value="PEROXIDASE_4"/>
    <property type="match status" value="1"/>
</dbReference>
<proteinExistence type="inferred from homology"/>
<keyword id="KW-0349">Heme</keyword>
<keyword id="KW-0376">Hydrogen peroxide</keyword>
<keyword id="KW-0408">Iron</keyword>
<keyword id="KW-0479">Metal-binding</keyword>
<keyword id="KW-0560">Oxidoreductase</keyword>
<keyword id="KW-0575">Peroxidase</keyword>
<evidence type="ECO:0000255" key="1">
    <source>
        <dbReference type="HAMAP-Rule" id="MF_01961"/>
    </source>
</evidence>
<evidence type="ECO:0000256" key="2">
    <source>
        <dbReference type="SAM" id="MobiDB-lite"/>
    </source>
</evidence>
<organism>
    <name type="scientific">Salmonella typhi</name>
    <dbReference type="NCBI Taxonomy" id="90370"/>
    <lineage>
        <taxon>Bacteria</taxon>
        <taxon>Pseudomonadati</taxon>
        <taxon>Pseudomonadota</taxon>
        <taxon>Gammaproteobacteria</taxon>
        <taxon>Enterobacterales</taxon>
        <taxon>Enterobacteriaceae</taxon>
        <taxon>Salmonella</taxon>
    </lineage>
</organism>